<organism>
    <name type="scientific">Bacteroides fragilis (strain YCH46)</name>
    <dbReference type="NCBI Taxonomy" id="295405"/>
    <lineage>
        <taxon>Bacteria</taxon>
        <taxon>Pseudomonadati</taxon>
        <taxon>Bacteroidota</taxon>
        <taxon>Bacteroidia</taxon>
        <taxon>Bacteroidales</taxon>
        <taxon>Bacteroidaceae</taxon>
        <taxon>Bacteroides</taxon>
    </lineage>
</organism>
<gene>
    <name evidence="1" type="primary">rpmI</name>
    <name type="ordered locus">BF1689</name>
</gene>
<evidence type="ECO:0000255" key="1">
    <source>
        <dbReference type="HAMAP-Rule" id="MF_00514"/>
    </source>
</evidence>
<evidence type="ECO:0000256" key="2">
    <source>
        <dbReference type="SAM" id="MobiDB-lite"/>
    </source>
</evidence>
<evidence type="ECO:0000305" key="3"/>
<feature type="chain" id="PRO_0000258638" description="Large ribosomal subunit protein bL35">
    <location>
        <begin position="1"/>
        <end position="65"/>
    </location>
</feature>
<feature type="region of interest" description="Disordered" evidence="2">
    <location>
        <begin position="1"/>
        <end position="40"/>
    </location>
</feature>
<feature type="compositionally biased region" description="Basic residues" evidence="2">
    <location>
        <begin position="21"/>
        <end position="40"/>
    </location>
</feature>
<name>RL35_BACFR</name>
<comment type="similarity">
    <text evidence="1">Belongs to the bacterial ribosomal protein bL35 family.</text>
</comment>
<protein>
    <recommendedName>
        <fullName evidence="1">Large ribosomal subunit protein bL35</fullName>
    </recommendedName>
    <alternativeName>
        <fullName evidence="3">50S ribosomal protein L35</fullName>
    </alternativeName>
</protein>
<accession>Q64VP0</accession>
<keyword id="KW-0687">Ribonucleoprotein</keyword>
<keyword id="KW-0689">Ribosomal protein</keyword>
<reference key="1">
    <citation type="journal article" date="2004" name="Proc. Natl. Acad. Sci. U.S.A.">
        <title>Genomic analysis of Bacteroides fragilis reveals extensive DNA inversions regulating cell surface adaptation.</title>
        <authorList>
            <person name="Kuwahara T."/>
            <person name="Yamashita A."/>
            <person name="Hirakawa H."/>
            <person name="Nakayama H."/>
            <person name="Toh H."/>
            <person name="Okada N."/>
            <person name="Kuhara S."/>
            <person name="Hattori M."/>
            <person name="Hayashi T."/>
            <person name="Ohnishi Y."/>
        </authorList>
    </citation>
    <scope>NUCLEOTIDE SEQUENCE [LARGE SCALE GENOMIC DNA]</scope>
    <source>
        <strain>YCH46</strain>
    </source>
</reference>
<proteinExistence type="inferred from homology"/>
<sequence length="65" mass="7420">MPKMKTNSGSKKRFALTGTGKIKRKHAFHSHILTKKSKKRKRNLCYSTTVDTTNVSQVKELLAMK</sequence>
<dbReference type="EMBL" id="AP006841">
    <property type="protein sequence ID" value="BAD48436.1"/>
    <property type="molecule type" value="Genomic_DNA"/>
</dbReference>
<dbReference type="RefSeq" id="WP_005786574.1">
    <property type="nucleotide sequence ID" value="NZ_UYXF01000008.1"/>
</dbReference>
<dbReference type="RefSeq" id="YP_098970.1">
    <property type="nucleotide sequence ID" value="NC_006347.1"/>
</dbReference>
<dbReference type="SMR" id="Q64VP0"/>
<dbReference type="STRING" id="295405.BF1689"/>
<dbReference type="GeneID" id="60369810"/>
<dbReference type="KEGG" id="bfr:BF1689"/>
<dbReference type="PATRIC" id="fig|295405.11.peg.1641"/>
<dbReference type="HOGENOM" id="CLU_169643_4_3_10"/>
<dbReference type="OrthoDB" id="47476at2"/>
<dbReference type="Proteomes" id="UP000002197">
    <property type="component" value="Chromosome"/>
</dbReference>
<dbReference type="GO" id="GO:0022625">
    <property type="term" value="C:cytosolic large ribosomal subunit"/>
    <property type="evidence" value="ECO:0007669"/>
    <property type="project" value="TreeGrafter"/>
</dbReference>
<dbReference type="GO" id="GO:0003735">
    <property type="term" value="F:structural constituent of ribosome"/>
    <property type="evidence" value="ECO:0007669"/>
    <property type="project" value="InterPro"/>
</dbReference>
<dbReference type="GO" id="GO:0006412">
    <property type="term" value="P:translation"/>
    <property type="evidence" value="ECO:0007669"/>
    <property type="project" value="UniProtKB-UniRule"/>
</dbReference>
<dbReference type="FunFam" id="4.10.410.60:FF:000001">
    <property type="entry name" value="50S ribosomal protein L35"/>
    <property type="match status" value="1"/>
</dbReference>
<dbReference type="Gene3D" id="4.10.410.60">
    <property type="match status" value="1"/>
</dbReference>
<dbReference type="HAMAP" id="MF_00514">
    <property type="entry name" value="Ribosomal_bL35"/>
    <property type="match status" value="1"/>
</dbReference>
<dbReference type="InterPro" id="IPR001706">
    <property type="entry name" value="Ribosomal_bL35"/>
</dbReference>
<dbReference type="InterPro" id="IPR021137">
    <property type="entry name" value="Ribosomal_bL35-like"/>
</dbReference>
<dbReference type="InterPro" id="IPR018265">
    <property type="entry name" value="Ribosomal_bL35_CS"/>
</dbReference>
<dbReference type="InterPro" id="IPR037229">
    <property type="entry name" value="Ribosomal_bL35_sf"/>
</dbReference>
<dbReference type="NCBIfam" id="TIGR00001">
    <property type="entry name" value="rpmI_bact"/>
    <property type="match status" value="1"/>
</dbReference>
<dbReference type="PANTHER" id="PTHR33343">
    <property type="entry name" value="54S RIBOSOMAL PROTEIN BL35M"/>
    <property type="match status" value="1"/>
</dbReference>
<dbReference type="PANTHER" id="PTHR33343:SF1">
    <property type="entry name" value="LARGE RIBOSOMAL SUBUNIT PROTEIN BL35M"/>
    <property type="match status" value="1"/>
</dbReference>
<dbReference type="Pfam" id="PF01632">
    <property type="entry name" value="Ribosomal_L35p"/>
    <property type="match status" value="1"/>
</dbReference>
<dbReference type="PRINTS" id="PR00064">
    <property type="entry name" value="RIBOSOMALL35"/>
</dbReference>
<dbReference type="SUPFAM" id="SSF143034">
    <property type="entry name" value="L35p-like"/>
    <property type="match status" value="1"/>
</dbReference>
<dbReference type="PROSITE" id="PS00936">
    <property type="entry name" value="RIBOSOMAL_L35"/>
    <property type="match status" value="1"/>
</dbReference>